<evidence type="ECO:0000255" key="1">
    <source>
        <dbReference type="HAMAP-Rule" id="MF_00044"/>
    </source>
</evidence>
<accession>B1I9S9</accession>
<gene>
    <name evidence="1" type="primary">aspS</name>
    <name type="ordered locus">SPH_2303</name>
</gene>
<name>SYD_STRPI</name>
<comment type="function">
    <text evidence="1">Catalyzes the attachment of L-aspartate to tRNA(Asp) in a two-step reaction: L-aspartate is first activated by ATP to form Asp-AMP and then transferred to the acceptor end of tRNA(Asp).</text>
</comment>
<comment type="catalytic activity">
    <reaction evidence="1">
        <text>tRNA(Asp) + L-aspartate + ATP = L-aspartyl-tRNA(Asp) + AMP + diphosphate</text>
        <dbReference type="Rhea" id="RHEA:19649"/>
        <dbReference type="Rhea" id="RHEA-COMP:9660"/>
        <dbReference type="Rhea" id="RHEA-COMP:9678"/>
        <dbReference type="ChEBI" id="CHEBI:29991"/>
        <dbReference type="ChEBI" id="CHEBI:30616"/>
        <dbReference type="ChEBI" id="CHEBI:33019"/>
        <dbReference type="ChEBI" id="CHEBI:78442"/>
        <dbReference type="ChEBI" id="CHEBI:78516"/>
        <dbReference type="ChEBI" id="CHEBI:456215"/>
        <dbReference type="EC" id="6.1.1.12"/>
    </reaction>
</comment>
<comment type="subunit">
    <text evidence="1">Homodimer.</text>
</comment>
<comment type="subcellular location">
    <subcellularLocation>
        <location evidence="1">Cytoplasm</location>
    </subcellularLocation>
</comment>
<comment type="similarity">
    <text evidence="1">Belongs to the class-II aminoacyl-tRNA synthetase family. Type 1 subfamily.</text>
</comment>
<feature type="chain" id="PRO_1000091050" description="Aspartate--tRNA ligase">
    <location>
        <begin position="1"/>
        <end position="587"/>
    </location>
</feature>
<feature type="region of interest" description="Aspartate" evidence="1">
    <location>
        <begin position="198"/>
        <end position="201"/>
    </location>
</feature>
<feature type="binding site" evidence="1">
    <location>
        <position position="174"/>
    </location>
    <ligand>
        <name>L-aspartate</name>
        <dbReference type="ChEBI" id="CHEBI:29991"/>
    </ligand>
</feature>
<feature type="binding site" evidence="1">
    <location>
        <begin position="220"/>
        <end position="222"/>
    </location>
    <ligand>
        <name>ATP</name>
        <dbReference type="ChEBI" id="CHEBI:30616"/>
    </ligand>
</feature>
<feature type="binding site" evidence="1">
    <location>
        <position position="220"/>
    </location>
    <ligand>
        <name>L-aspartate</name>
        <dbReference type="ChEBI" id="CHEBI:29991"/>
    </ligand>
</feature>
<feature type="binding site" evidence="1">
    <location>
        <position position="229"/>
    </location>
    <ligand>
        <name>ATP</name>
        <dbReference type="ChEBI" id="CHEBI:30616"/>
    </ligand>
</feature>
<feature type="binding site" evidence="1">
    <location>
        <position position="443"/>
    </location>
    <ligand>
        <name>L-aspartate</name>
        <dbReference type="ChEBI" id="CHEBI:29991"/>
    </ligand>
</feature>
<feature type="binding site" evidence="1">
    <location>
        <position position="477"/>
    </location>
    <ligand>
        <name>ATP</name>
        <dbReference type="ChEBI" id="CHEBI:30616"/>
    </ligand>
</feature>
<feature type="binding site" evidence="1">
    <location>
        <position position="484"/>
    </location>
    <ligand>
        <name>L-aspartate</name>
        <dbReference type="ChEBI" id="CHEBI:29991"/>
    </ligand>
</feature>
<feature type="binding site" evidence="1">
    <location>
        <begin position="529"/>
        <end position="532"/>
    </location>
    <ligand>
        <name>ATP</name>
        <dbReference type="ChEBI" id="CHEBI:30616"/>
    </ligand>
</feature>
<sequence length="587" mass="66155">MKRSMYAGRVREEHIGQEITLKGWVGRRRDLGGLIFIDLRDREGIMQLVINPEKVSAEVMATAESLRSEFVIEVTGQVAAREQANDKLPTGAVELNVTALIVLNTAKTTPFEIKDGIEANDDTRLRYRYLDLRRPEMLENLKLRAKVTHSIRNYLDELEFIDVETPFLSKSTPEGARDYLVPSRVNKGHFYALPQSPQITKQLLMNAGFDRYYQIVKCFRDEDLRGDRQPEFTQVDLETSFLTEQEIQDITEGLIARVMKETKGIEVTLPFPRMKYDDAMALYGSDKPDTRFDMLLQDLTEVVKGVDFKVFSEAPAVKAIVVKGAADNYSRKDIDKMTEVAKQYGAKGLAWVKVVDGELNGPVAKFLTSIQAELTTALSLEDKDLVLFVADTLEVANATLGALRGRIAKELGLIDNDKFNFLWVVDWPMFEWSEEEGRYMSAHHPFTLPQEETAHELEGDLAKVRAIAYDIVLNGYELGGGSLRINQKDLQERMFKALGFSAEEANDQFGFLLEAMDYGFPPHGGLAIGLDRFVMLLAGEENIREVIAFPKNNKASDPMTQAPSTVALKQLEELSLQVEEDETSKTN</sequence>
<organism>
    <name type="scientific">Streptococcus pneumoniae (strain Hungary19A-6)</name>
    <dbReference type="NCBI Taxonomy" id="487214"/>
    <lineage>
        <taxon>Bacteria</taxon>
        <taxon>Bacillati</taxon>
        <taxon>Bacillota</taxon>
        <taxon>Bacilli</taxon>
        <taxon>Lactobacillales</taxon>
        <taxon>Streptococcaceae</taxon>
        <taxon>Streptococcus</taxon>
    </lineage>
</organism>
<proteinExistence type="inferred from homology"/>
<dbReference type="EC" id="6.1.1.12" evidence="1"/>
<dbReference type="EMBL" id="CP000936">
    <property type="protein sequence ID" value="ACA36831.1"/>
    <property type="molecule type" value="Genomic_DNA"/>
</dbReference>
<dbReference type="RefSeq" id="WP_000830883.1">
    <property type="nucleotide sequence ID" value="NC_010380.1"/>
</dbReference>
<dbReference type="SMR" id="B1I9S9"/>
<dbReference type="KEGG" id="spv:SPH_2303"/>
<dbReference type="HOGENOM" id="CLU_014330_3_2_9"/>
<dbReference type="Proteomes" id="UP000002163">
    <property type="component" value="Chromosome"/>
</dbReference>
<dbReference type="GO" id="GO:0005737">
    <property type="term" value="C:cytoplasm"/>
    <property type="evidence" value="ECO:0007669"/>
    <property type="project" value="UniProtKB-SubCell"/>
</dbReference>
<dbReference type="GO" id="GO:0004815">
    <property type="term" value="F:aspartate-tRNA ligase activity"/>
    <property type="evidence" value="ECO:0007669"/>
    <property type="project" value="UniProtKB-UniRule"/>
</dbReference>
<dbReference type="GO" id="GO:0005524">
    <property type="term" value="F:ATP binding"/>
    <property type="evidence" value="ECO:0007669"/>
    <property type="project" value="UniProtKB-UniRule"/>
</dbReference>
<dbReference type="GO" id="GO:0140096">
    <property type="term" value="F:catalytic activity, acting on a protein"/>
    <property type="evidence" value="ECO:0007669"/>
    <property type="project" value="UniProtKB-ARBA"/>
</dbReference>
<dbReference type="GO" id="GO:0003676">
    <property type="term" value="F:nucleic acid binding"/>
    <property type="evidence" value="ECO:0007669"/>
    <property type="project" value="InterPro"/>
</dbReference>
<dbReference type="GO" id="GO:0016740">
    <property type="term" value="F:transferase activity"/>
    <property type="evidence" value="ECO:0007669"/>
    <property type="project" value="UniProtKB-ARBA"/>
</dbReference>
<dbReference type="GO" id="GO:0006422">
    <property type="term" value="P:aspartyl-tRNA aminoacylation"/>
    <property type="evidence" value="ECO:0007669"/>
    <property type="project" value="UniProtKB-UniRule"/>
</dbReference>
<dbReference type="CDD" id="cd00777">
    <property type="entry name" value="AspRS_core"/>
    <property type="match status" value="1"/>
</dbReference>
<dbReference type="CDD" id="cd04317">
    <property type="entry name" value="EcAspRS_like_N"/>
    <property type="match status" value="1"/>
</dbReference>
<dbReference type="Gene3D" id="3.30.930.10">
    <property type="entry name" value="Bira Bifunctional Protein, Domain 2"/>
    <property type="match status" value="1"/>
</dbReference>
<dbReference type="Gene3D" id="3.30.1360.30">
    <property type="entry name" value="GAD-like domain"/>
    <property type="match status" value="1"/>
</dbReference>
<dbReference type="Gene3D" id="2.40.50.140">
    <property type="entry name" value="Nucleic acid-binding proteins"/>
    <property type="match status" value="1"/>
</dbReference>
<dbReference type="HAMAP" id="MF_00044">
    <property type="entry name" value="Asp_tRNA_synth_type1"/>
    <property type="match status" value="1"/>
</dbReference>
<dbReference type="InterPro" id="IPR004364">
    <property type="entry name" value="Aa-tRNA-synt_II"/>
</dbReference>
<dbReference type="InterPro" id="IPR006195">
    <property type="entry name" value="aa-tRNA-synth_II"/>
</dbReference>
<dbReference type="InterPro" id="IPR045864">
    <property type="entry name" value="aa-tRNA-synth_II/BPL/LPL"/>
</dbReference>
<dbReference type="InterPro" id="IPR004524">
    <property type="entry name" value="Asp-tRNA-ligase_1"/>
</dbReference>
<dbReference type="InterPro" id="IPR047089">
    <property type="entry name" value="Asp-tRNA-ligase_1_N"/>
</dbReference>
<dbReference type="InterPro" id="IPR002312">
    <property type="entry name" value="Asp/Asn-tRNA-synth_IIb"/>
</dbReference>
<dbReference type="InterPro" id="IPR047090">
    <property type="entry name" value="AspRS_core"/>
</dbReference>
<dbReference type="InterPro" id="IPR004115">
    <property type="entry name" value="GAD-like_sf"/>
</dbReference>
<dbReference type="InterPro" id="IPR029351">
    <property type="entry name" value="GAD_dom"/>
</dbReference>
<dbReference type="InterPro" id="IPR012340">
    <property type="entry name" value="NA-bd_OB-fold"/>
</dbReference>
<dbReference type="InterPro" id="IPR004365">
    <property type="entry name" value="NA-bd_OB_tRNA"/>
</dbReference>
<dbReference type="NCBIfam" id="TIGR00459">
    <property type="entry name" value="aspS_bact"/>
    <property type="match status" value="1"/>
</dbReference>
<dbReference type="NCBIfam" id="NF001750">
    <property type="entry name" value="PRK00476.1"/>
    <property type="match status" value="1"/>
</dbReference>
<dbReference type="PANTHER" id="PTHR22594:SF5">
    <property type="entry name" value="ASPARTATE--TRNA LIGASE, MITOCHONDRIAL"/>
    <property type="match status" value="1"/>
</dbReference>
<dbReference type="PANTHER" id="PTHR22594">
    <property type="entry name" value="ASPARTYL/LYSYL-TRNA SYNTHETASE"/>
    <property type="match status" value="1"/>
</dbReference>
<dbReference type="Pfam" id="PF02938">
    <property type="entry name" value="GAD"/>
    <property type="match status" value="1"/>
</dbReference>
<dbReference type="Pfam" id="PF00152">
    <property type="entry name" value="tRNA-synt_2"/>
    <property type="match status" value="1"/>
</dbReference>
<dbReference type="Pfam" id="PF01336">
    <property type="entry name" value="tRNA_anti-codon"/>
    <property type="match status" value="1"/>
</dbReference>
<dbReference type="PRINTS" id="PR01042">
    <property type="entry name" value="TRNASYNTHASP"/>
</dbReference>
<dbReference type="SUPFAM" id="SSF55681">
    <property type="entry name" value="Class II aaRS and biotin synthetases"/>
    <property type="match status" value="1"/>
</dbReference>
<dbReference type="SUPFAM" id="SSF55261">
    <property type="entry name" value="GAD domain-like"/>
    <property type="match status" value="1"/>
</dbReference>
<dbReference type="SUPFAM" id="SSF50249">
    <property type="entry name" value="Nucleic acid-binding proteins"/>
    <property type="match status" value="1"/>
</dbReference>
<dbReference type="PROSITE" id="PS50862">
    <property type="entry name" value="AA_TRNA_LIGASE_II"/>
    <property type="match status" value="1"/>
</dbReference>
<protein>
    <recommendedName>
        <fullName evidence="1">Aspartate--tRNA ligase</fullName>
        <ecNumber evidence="1">6.1.1.12</ecNumber>
    </recommendedName>
    <alternativeName>
        <fullName evidence="1">Aspartyl-tRNA synthetase</fullName>
        <shortName evidence="1">AspRS</shortName>
    </alternativeName>
</protein>
<reference key="1">
    <citation type="journal article" date="2010" name="Genome Biol.">
        <title>Structure and dynamics of the pan-genome of Streptococcus pneumoniae and closely related species.</title>
        <authorList>
            <person name="Donati C."/>
            <person name="Hiller N.L."/>
            <person name="Tettelin H."/>
            <person name="Muzzi A."/>
            <person name="Croucher N.J."/>
            <person name="Angiuoli S.V."/>
            <person name="Oggioni M."/>
            <person name="Dunning Hotopp J.C."/>
            <person name="Hu F.Z."/>
            <person name="Riley D.R."/>
            <person name="Covacci A."/>
            <person name="Mitchell T.J."/>
            <person name="Bentley S.D."/>
            <person name="Kilian M."/>
            <person name="Ehrlich G.D."/>
            <person name="Rappuoli R."/>
            <person name="Moxon E.R."/>
            <person name="Masignani V."/>
        </authorList>
    </citation>
    <scope>NUCLEOTIDE SEQUENCE [LARGE SCALE GENOMIC DNA]</scope>
    <source>
        <strain>Hungary19A-6</strain>
    </source>
</reference>
<keyword id="KW-0030">Aminoacyl-tRNA synthetase</keyword>
<keyword id="KW-0067">ATP-binding</keyword>
<keyword id="KW-0963">Cytoplasm</keyword>
<keyword id="KW-0436">Ligase</keyword>
<keyword id="KW-0547">Nucleotide-binding</keyword>
<keyword id="KW-0648">Protein biosynthesis</keyword>